<name>EST2E_RAT</name>
<reference key="1">
    <citation type="journal article" date="2004" name="Nature">
        <title>Genome sequence of the Brown Norway rat yields insights into mammalian evolution.</title>
        <authorList>
            <person name="Gibbs R.A."/>
            <person name="Weinstock G.M."/>
            <person name="Metzker M.L."/>
            <person name="Muzny D.M."/>
            <person name="Sodergren E.J."/>
            <person name="Scherer S."/>
            <person name="Scott G."/>
            <person name="Steffen D."/>
            <person name="Worley K.C."/>
            <person name="Burch P.E."/>
            <person name="Okwuonu G."/>
            <person name="Hines S."/>
            <person name="Lewis L."/>
            <person name="Deramo C."/>
            <person name="Delgado O."/>
            <person name="Dugan-Rocha S."/>
            <person name="Miner G."/>
            <person name="Morgan M."/>
            <person name="Hawes A."/>
            <person name="Gill R."/>
            <person name="Holt R.A."/>
            <person name="Adams M.D."/>
            <person name="Amanatides P.G."/>
            <person name="Baden-Tillson H."/>
            <person name="Barnstead M."/>
            <person name="Chin S."/>
            <person name="Evans C.A."/>
            <person name="Ferriera S."/>
            <person name="Fosler C."/>
            <person name="Glodek A."/>
            <person name="Gu Z."/>
            <person name="Jennings D."/>
            <person name="Kraft C.L."/>
            <person name="Nguyen T."/>
            <person name="Pfannkoch C.M."/>
            <person name="Sitter C."/>
            <person name="Sutton G.G."/>
            <person name="Venter J.C."/>
            <person name="Woodage T."/>
            <person name="Smith D."/>
            <person name="Lee H.-M."/>
            <person name="Gustafson E."/>
            <person name="Cahill P."/>
            <person name="Kana A."/>
            <person name="Doucette-Stamm L."/>
            <person name="Weinstock K."/>
            <person name="Fechtel K."/>
            <person name="Weiss R.B."/>
            <person name="Dunn D.M."/>
            <person name="Green E.D."/>
            <person name="Blakesley R.W."/>
            <person name="Bouffard G.G."/>
            <person name="De Jong P.J."/>
            <person name="Osoegawa K."/>
            <person name="Zhu B."/>
            <person name="Marra M."/>
            <person name="Schein J."/>
            <person name="Bosdet I."/>
            <person name="Fjell C."/>
            <person name="Jones S."/>
            <person name="Krzywinski M."/>
            <person name="Mathewson C."/>
            <person name="Siddiqui A."/>
            <person name="Wye N."/>
            <person name="McPherson J."/>
            <person name="Zhao S."/>
            <person name="Fraser C.M."/>
            <person name="Shetty J."/>
            <person name="Shatsman S."/>
            <person name="Geer K."/>
            <person name="Chen Y."/>
            <person name="Abramzon S."/>
            <person name="Nierman W.C."/>
            <person name="Havlak P.H."/>
            <person name="Chen R."/>
            <person name="Durbin K.J."/>
            <person name="Egan A."/>
            <person name="Ren Y."/>
            <person name="Song X.-Z."/>
            <person name="Li B."/>
            <person name="Liu Y."/>
            <person name="Qin X."/>
            <person name="Cawley S."/>
            <person name="Cooney A.J."/>
            <person name="D'Souza L.M."/>
            <person name="Martin K."/>
            <person name="Wu J.Q."/>
            <person name="Gonzalez-Garay M.L."/>
            <person name="Jackson A.R."/>
            <person name="Kalafus K.J."/>
            <person name="McLeod M.P."/>
            <person name="Milosavljevic A."/>
            <person name="Virk D."/>
            <person name="Volkov A."/>
            <person name="Wheeler D.A."/>
            <person name="Zhang Z."/>
            <person name="Bailey J.A."/>
            <person name="Eichler E.E."/>
            <person name="Tuzun E."/>
            <person name="Birney E."/>
            <person name="Mongin E."/>
            <person name="Ureta-Vidal A."/>
            <person name="Woodwark C."/>
            <person name="Zdobnov E."/>
            <person name="Bork P."/>
            <person name="Suyama M."/>
            <person name="Torrents D."/>
            <person name="Alexandersson M."/>
            <person name="Trask B.J."/>
            <person name="Young J.M."/>
            <person name="Huang H."/>
            <person name="Wang H."/>
            <person name="Xing H."/>
            <person name="Daniels S."/>
            <person name="Gietzen D."/>
            <person name="Schmidt J."/>
            <person name="Stevens K."/>
            <person name="Vitt U."/>
            <person name="Wingrove J."/>
            <person name="Camara F."/>
            <person name="Mar Alba M."/>
            <person name="Abril J.F."/>
            <person name="Guigo R."/>
            <person name="Smit A."/>
            <person name="Dubchak I."/>
            <person name="Rubin E.M."/>
            <person name="Couronne O."/>
            <person name="Poliakov A."/>
            <person name="Huebner N."/>
            <person name="Ganten D."/>
            <person name="Goesele C."/>
            <person name="Hummel O."/>
            <person name="Kreitler T."/>
            <person name="Lee Y.-A."/>
            <person name="Monti J."/>
            <person name="Schulz H."/>
            <person name="Zimdahl H."/>
            <person name="Himmelbauer H."/>
            <person name="Lehrach H."/>
            <person name="Jacob H.J."/>
            <person name="Bromberg S."/>
            <person name="Gullings-Handley J."/>
            <person name="Jensen-Seaman M.I."/>
            <person name="Kwitek A.E."/>
            <person name="Lazar J."/>
            <person name="Pasko D."/>
            <person name="Tonellato P.J."/>
            <person name="Twigger S."/>
            <person name="Ponting C.P."/>
            <person name="Duarte J.M."/>
            <person name="Rice S."/>
            <person name="Goodstadt L."/>
            <person name="Beatson S.A."/>
            <person name="Emes R.D."/>
            <person name="Winter E.E."/>
            <person name="Webber C."/>
            <person name="Brandt P."/>
            <person name="Nyakatura G."/>
            <person name="Adetobi M."/>
            <person name="Chiaromonte F."/>
            <person name="Elnitski L."/>
            <person name="Eswara P."/>
            <person name="Hardison R.C."/>
            <person name="Hou M."/>
            <person name="Kolbe D."/>
            <person name="Makova K."/>
            <person name="Miller W."/>
            <person name="Nekrutenko A."/>
            <person name="Riemer C."/>
            <person name="Schwartz S."/>
            <person name="Taylor J."/>
            <person name="Yang S."/>
            <person name="Zhang Y."/>
            <person name="Lindpaintner K."/>
            <person name="Andrews T.D."/>
            <person name="Caccamo M."/>
            <person name="Clamp M."/>
            <person name="Clarke L."/>
            <person name="Curwen V."/>
            <person name="Durbin R.M."/>
            <person name="Eyras E."/>
            <person name="Searle S.M."/>
            <person name="Cooper G.M."/>
            <person name="Batzoglou S."/>
            <person name="Brudno M."/>
            <person name="Sidow A."/>
            <person name="Stone E.A."/>
            <person name="Payseur B.A."/>
            <person name="Bourque G."/>
            <person name="Lopez-Otin C."/>
            <person name="Puente X.S."/>
            <person name="Chakrabarti K."/>
            <person name="Chatterji S."/>
            <person name="Dewey C."/>
            <person name="Pachter L."/>
            <person name="Bray N."/>
            <person name="Yap V.B."/>
            <person name="Caspi A."/>
            <person name="Tesler G."/>
            <person name="Pevzner P.A."/>
            <person name="Haussler D."/>
            <person name="Roskin K.M."/>
            <person name="Baertsch R."/>
            <person name="Clawson H."/>
            <person name="Furey T.S."/>
            <person name="Hinrichs A.S."/>
            <person name="Karolchik D."/>
            <person name="Kent W.J."/>
            <person name="Rosenbloom K.R."/>
            <person name="Trumbower H."/>
            <person name="Weirauch M."/>
            <person name="Cooper D.N."/>
            <person name="Stenson P.D."/>
            <person name="Ma B."/>
            <person name="Brent M."/>
            <person name="Arumugam M."/>
            <person name="Shteynberg D."/>
            <person name="Copley R.R."/>
            <person name="Taylor M.S."/>
            <person name="Riethman H."/>
            <person name="Mudunuri U."/>
            <person name="Peterson J."/>
            <person name="Guyer M."/>
            <person name="Felsenfeld A."/>
            <person name="Old S."/>
            <person name="Mockrin S."/>
            <person name="Collins F.S."/>
        </authorList>
    </citation>
    <scope>NUCLEOTIDE SEQUENCE [LARGE SCALE GENOMIC DNA]</scope>
    <source>
        <strain>Brown Norway</strain>
    </source>
</reference>
<reference evidence="9" key="2">
    <citation type="submission" date="1995-05" db="EMBL/GenBank/DDBJ databases">
        <title>Molecular cloning of a rat liver cDNA encoding a novel phenobarbital-inducible carboxylesterase.</title>
        <authorList>
            <person name="Sone T."/>
            <person name="Sawada T."/>
            <person name="Takabatake E."/>
            <person name="Wang C."/>
            <person name="Isobe M."/>
        </authorList>
    </citation>
    <scope>NUCLEOTIDE SEQUENCE [MRNA] OF 13-567</scope>
    <source>
        <strain evidence="9">Wistar</strain>
        <tissue evidence="9">Liver</tissue>
    </source>
</reference>
<reference key="3">
    <citation type="journal article" date="2002" name="Eur. J. Biochem.">
        <title>Identification of microsomal rat liver carboxylesterases and their activity with retinyl palmitate.</title>
        <authorList>
            <person name="Sanghani S.P."/>
            <person name="Davis W.I."/>
            <person name="Dumaual N.G."/>
            <person name="Mahrenholz A."/>
            <person name="Bosron W.F."/>
        </authorList>
    </citation>
    <scope>CATALYTIC ACTIVITY</scope>
    <scope>SUBCELLULAR LOCATION</scope>
    <scope>FUNCTION</scope>
    <scope>TISSUE SPECIFICITY</scope>
</reference>
<evidence type="ECO:0000250" key="1">
    <source>
        <dbReference type="UniProtKB" id="P14943"/>
    </source>
</evidence>
<evidence type="ECO:0000250" key="2">
    <source>
        <dbReference type="UniProtKB" id="P23141"/>
    </source>
</evidence>
<evidence type="ECO:0000250" key="3">
    <source>
        <dbReference type="UniProtKB" id="Q8BK48"/>
    </source>
</evidence>
<evidence type="ECO:0000255" key="4">
    <source>
        <dbReference type="PROSITE-ProRule" id="PRU10039"/>
    </source>
</evidence>
<evidence type="ECO:0000255" key="5">
    <source>
        <dbReference type="RuleBase" id="RU361235"/>
    </source>
</evidence>
<evidence type="ECO:0000269" key="6">
    <source>
    </source>
</evidence>
<evidence type="ECO:0000305" key="7"/>
<evidence type="ECO:0000305" key="8">
    <source>
    </source>
</evidence>
<evidence type="ECO:0000312" key="9">
    <source>
        <dbReference type="EMBL" id="BAA23607.1"/>
    </source>
</evidence>
<evidence type="ECO:0000312" key="10">
    <source>
        <dbReference type="RGD" id="621563"/>
    </source>
</evidence>
<comment type="function">
    <text evidence="3 6">Carboxylesterase that catalyzes the hydrolysis of pyrethroids pesticides. Hydrolyzes trans-permethrin at a rate about 22-fold higher than cis-permethrin. Also hydrolyzes trans-cypermethrin (By similarity). Hydrolyzes retinyl esters (PubMed:12230550).</text>
</comment>
<comment type="catalytic activity">
    <reaction evidence="6">
        <text>all-trans-retinyl hexadecanoate + H2O = all-trans-retinol + hexadecanoate + H(+)</text>
        <dbReference type="Rhea" id="RHEA:13933"/>
        <dbReference type="ChEBI" id="CHEBI:7896"/>
        <dbReference type="ChEBI" id="CHEBI:15377"/>
        <dbReference type="ChEBI" id="CHEBI:15378"/>
        <dbReference type="ChEBI" id="CHEBI:17336"/>
        <dbReference type="ChEBI" id="CHEBI:17616"/>
    </reaction>
    <physiologicalReaction direction="left-to-right" evidence="8">
        <dbReference type="Rhea" id="RHEA:13934"/>
    </physiologicalReaction>
</comment>
<comment type="catalytic activity">
    <reaction evidence="3">
        <text>(-)-trans-permethrin + H2O = (3-phenoxyphenyl)methanol + (1S,3R)-3-(2,2-dichlorovinyl)-2,2-dimethylcyclopropanecarboxylate + H(+)</text>
        <dbReference type="Rhea" id="RHEA:30283"/>
        <dbReference type="ChEBI" id="CHEBI:15377"/>
        <dbReference type="ChEBI" id="CHEBI:15378"/>
        <dbReference type="ChEBI" id="CHEBI:62523"/>
        <dbReference type="ChEBI" id="CHEBI:62527"/>
        <dbReference type="ChEBI" id="CHEBI:62531"/>
        <dbReference type="EC" id="3.1.1.88"/>
    </reaction>
</comment>
<comment type="biophysicochemical properties">
    <kinetics>
        <text evidence="6">kcat is 0.27 min(-1) with retinyl palmitate as substrate.</text>
    </kinetics>
</comment>
<comment type="subcellular location">
    <subcellularLocation>
        <location evidence="6">Microsome</location>
    </subcellularLocation>
</comment>
<comment type="tissue specificity">
    <text evidence="6">Expressed in liver.</text>
</comment>
<comment type="similarity">
    <text evidence="7">Belongs to the type-B carboxylesterase/lipase family.</text>
</comment>
<sequence>MAQTRAWKSIMPLESLPGWLNAVVWGLLLLFCQVQGQDSASPIRNTHTGQVRGSFVHVKDTKSGVHTFLGIPFAKPPIGPLRFAPPEPPEPWSGVRDGTSHPAMCLQNIDGLNLENLKIKMSRSPVSMSEDCLYLSIYTPAHTHKDSNLPVMVWIHGGGLCWGMASTYDGSMLAAIEDVVVVTIQYRLGILGFFSTGDEHARGNWGYLDQVAALRWVQQNIVHFGGNPDRVTIFGESAGGISVSSHVVSPMSQGLFHGAIMESGVALLPNLISNTSEVIYTMVANLSGCEPVDSEALMSCLREKSEEEMLAINNIVRTISGVVDGKFLPRHPLELLASVDFHPVPSIIGINSDEYGWIIPMLHPDSTMKEINRETMRAVLKNTAVQMMLPPECSDLLMEEYMGDTEDSKTLQIQFNEMMGDFIFVIPALQVAHFQRSHAPVYFYEFQHQSNFLKDIRPPHVKADHGDELPYVIGYLFWDMKFVFTEEEKLLSRKMIKYWANFARHGNPNSEGLPYWPALDHDEQYLQLDIQPVVGRALKARRLKFWTKTLPQKIQELKGSQDNHTEL</sequence>
<proteinExistence type="evidence at protein level"/>
<accession>G3V7J5</accession>
<accession>O35535</accession>
<protein>
    <recommendedName>
        <fullName evidence="3">Pyrethroid hydrolase Ces2e</fullName>
        <ecNumber evidence="3">3.1.1.88</ecNumber>
    </recommendedName>
    <alternativeName>
        <fullName evidence="5">Carboxylic ester hydrolase</fullName>
        <ecNumber evidence="5">3.1.1.-</ecNumber>
    </alternativeName>
</protein>
<dbReference type="EC" id="3.1.1.88" evidence="3"/>
<dbReference type="EC" id="3.1.1.-" evidence="5"/>
<dbReference type="EMBL" id="AABR07042570">
    <property type="status" value="NOT_ANNOTATED_CDS"/>
    <property type="molecule type" value="Genomic_DNA"/>
</dbReference>
<dbReference type="EMBL" id="AABR07042571">
    <property type="status" value="NOT_ANNOTATED_CDS"/>
    <property type="molecule type" value="Genomic_DNA"/>
</dbReference>
<dbReference type="EMBL" id="D50580">
    <property type="protein sequence ID" value="BAA23607.1"/>
    <property type="molecule type" value="mRNA"/>
</dbReference>
<dbReference type="SMR" id="G3V7J5"/>
<dbReference type="FunCoup" id="G3V7J5">
    <property type="interactions" value="17"/>
</dbReference>
<dbReference type="STRING" id="10116.ENSRNOP00000015724"/>
<dbReference type="SwissLipids" id="SLP:000001985"/>
<dbReference type="ESTHER" id="ratno-phebest">
    <property type="family name" value="Carb_B_Chordata"/>
</dbReference>
<dbReference type="MEROPS" id="S09.970"/>
<dbReference type="iPTMnet" id="G3V7J5"/>
<dbReference type="PhosphoSitePlus" id="G3V7J5"/>
<dbReference type="PaxDb" id="10116-ENSRNOP00000015724"/>
<dbReference type="Ensembl" id="ENSRNOT00000015724.8">
    <property type="protein sequence ID" value="ENSRNOP00000015724.5"/>
    <property type="gene ID" value="ENSRNOG00000011635.8"/>
</dbReference>
<dbReference type="AGR" id="RGD:621563"/>
<dbReference type="RGD" id="621563">
    <property type="gene designation" value="Ces2e"/>
</dbReference>
<dbReference type="eggNOG" id="KOG1516">
    <property type="taxonomic scope" value="Eukaryota"/>
</dbReference>
<dbReference type="GeneTree" id="ENSGT00940000153793"/>
<dbReference type="HOGENOM" id="CLU_006586_13_2_1"/>
<dbReference type="InParanoid" id="G3V7J5"/>
<dbReference type="OMA" id="SIAHHIM"/>
<dbReference type="OrthoDB" id="3200163at2759"/>
<dbReference type="TreeFam" id="TF315470"/>
<dbReference type="BRENDA" id="3.1.1.1">
    <property type="organism ID" value="5301"/>
</dbReference>
<dbReference type="PRO" id="PR:G3V7J5"/>
<dbReference type="Proteomes" id="UP000002494">
    <property type="component" value="Chromosome 19"/>
</dbReference>
<dbReference type="Bgee" id="ENSRNOG00000011635">
    <property type="expression patterns" value="Expressed in liver and 3 other cell types or tissues"/>
</dbReference>
<dbReference type="GO" id="GO:0005783">
    <property type="term" value="C:endoplasmic reticulum"/>
    <property type="evidence" value="ECO:0007669"/>
    <property type="project" value="UniProtKB-KW"/>
</dbReference>
<dbReference type="GO" id="GO:0043231">
    <property type="term" value="C:intracellular membrane-bounded organelle"/>
    <property type="evidence" value="ECO:0000314"/>
    <property type="project" value="UniProtKB"/>
</dbReference>
<dbReference type="GO" id="GO:0047376">
    <property type="term" value="F:all-trans-retinyl-palmitate hydrolase, all-trans-retinol forming activity"/>
    <property type="evidence" value="ECO:0007669"/>
    <property type="project" value="RHEA"/>
</dbReference>
<dbReference type="GO" id="GO:0106435">
    <property type="term" value="F:carboxylesterase activity"/>
    <property type="evidence" value="ECO:0000266"/>
    <property type="project" value="RGD"/>
</dbReference>
<dbReference type="GO" id="GO:0052689">
    <property type="term" value="F:carboxylic ester hydrolase activity"/>
    <property type="evidence" value="ECO:0000318"/>
    <property type="project" value="GO_Central"/>
</dbReference>
<dbReference type="GO" id="GO:0050253">
    <property type="term" value="F:retinyl-palmitate esterase activity"/>
    <property type="evidence" value="ECO:0000314"/>
    <property type="project" value="UniProtKB"/>
</dbReference>
<dbReference type="GO" id="GO:0102209">
    <property type="term" value="F:trans-permethrin hydrolase activity"/>
    <property type="evidence" value="ECO:0007669"/>
    <property type="project" value="UniProtKB-EC"/>
</dbReference>
<dbReference type="GO" id="GO:0001523">
    <property type="term" value="P:retinoid metabolic process"/>
    <property type="evidence" value="ECO:0000304"/>
    <property type="project" value="UniProtKB"/>
</dbReference>
<dbReference type="CDD" id="cd00312">
    <property type="entry name" value="Esterase_lipase"/>
    <property type="match status" value="1"/>
</dbReference>
<dbReference type="FunFam" id="3.40.50.1820:FF:000011">
    <property type="entry name" value="Carboxylic ester hydrolase"/>
    <property type="match status" value="1"/>
</dbReference>
<dbReference type="Gene3D" id="3.40.50.1820">
    <property type="entry name" value="alpha/beta hydrolase"/>
    <property type="match status" value="1"/>
</dbReference>
<dbReference type="InterPro" id="IPR029058">
    <property type="entry name" value="AB_hydrolase_fold"/>
</dbReference>
<dbReference type="InterPro" id="IPR002018">
    <property type="entry name" value="CarbesteraseB"/>
</dbReference>
<dbReference type="InterPro" id="IPR019826">
    <property type="entry name" value="Carboxylesterase_B_AS"/>
</dbReference>
<dbReference type="InterPro" id="IPR019819">
    <property type="entry name" value="Carboxylesterase_B_CS"/>
</dbReference>
<dbReference type="InterPro" id="IPR050309">
    <property type="entry name" value="Type-B_Carboxylest/Lipase"/>
</dbReference>
<dbReference type="PANTHER" id="PTHR11559">
    <property type="entry name" value="CARBOXYLESTERASE"/>
    <property type="match status" value="1"/>
</dbReference>
<dbReference type="Pfam" id="PF00135">
    <property type="entry name" value="COesterase"/>
    <property type="match status" value="1"/>
</dbReference>
<dbReference type="SUPFAM" id="SSF53474">
    <property type="entry name" value="alpha/beta-Hydrolases"/>
    <property type="match status" value="1"/>
</dbReference>
<dbReference type="PROSITE" id="PS00122">
    <property type="entry name" value="CARBOXYLESTERASE_B_1"/>
    <property type="match status" value="1"/>
</dbReference>
<dbReference type="PROSITE" id="PS00941">
    <property type="entry name" value="CARBOXYLESTERASE_B_2"/>
    <property type="match status" value="1"/>
</dbReference>
<organism>
    <name type="scientific">Rattus norvegicus</name>
    <name type="common">Rat</name>
    <dbReference type="NCBI Taxonomy" id="10116"/>
    <lineage>
        <taxon>Eukaryota</taxon>
        <taxon>Metazoa</taxon>
        <taxon>Chordata</taxon>
        <taxon>Craniata</taxon>
        <taxon>Vertebrata</taxon>
        <taxon>Euteleostomi</taxon>
        <taxon>Mammalia</taxon>
        <taxon>Eutheria</taxon>
        <taxon>Euarchontoglires</taxon>
        <taxon>Glires</taxon>
        <taxon>Rodentia</taxon>
        <taxon>Myomorpha</taxon>
        <taxon>Muroidea</taxon>
        <taxon>Muridae</taxon>
        <taxon>Murinae</taxon>
        <taxon>Rattus</taxon>
    </lineage>
</organism>
<gene>
    <name evidence="10" type="primary">Ces2e</name>
</gene>
<feature type="signal peptide" evidence="5">
    <location>
        <begin position="1"/>
        <end position="36"/>
    </location>
</feature>
<feature type="chain" id="PRO_5005132000" description="Pyrethroid hydrolase Ces2e" evidence="5">
    <location>
        <begin position="37"/>
        <end position="567"/>
    </location>
</feature>
<feature type="active site" description="Acyl-ester intermediate" evidence="4">
    <location>
        <position position="237"/>
    </location>
</feature>
<feature type="active site" description="Charge relay system" evidence="2">
    <location>
        <position position="354"/>
    </location>
</feature>
<feature type="active site" description="Charge relay system" evidence="2">
    <location>
        <position position="465"/>
    </location>
</feature>
<feature type="modified residue" description="Pyrrolidone carboxylic acid" evidence="1">
    <location>
        <position position="37"/>
    </location>
</feature>
<feature type="disulfide bond" evidence="2">
    <location>
        <begin position="105"/>
        <end position="132"/>
    </location>
</feature>
<feature type="disulfide bond" evidence="2">
    <location>
        <begin position="289"/>
        <end position="300"/>
    </location>
</feature>
<feature type="sequence conflict" description="In Ref. 2; BAA23607." evidence="7" ref="2">
    <original>M</original>
    <variation>T</variation>
    <location>
        <position position="398"/>
    </location>
</feature>
<keyword id="KW-1015">Disulfide bond</keyword>
<keyword id="KW-0256">Endoplasmic reticulum</keyword>
<keyword id="KW-0378">Hydrolase</keyword>
<keyword id="KW-0492">Microsome</keyword>
<keyword id="KW-0873">Pyrrolidone carboxylic acid</keyword>
<keyword id="KW-1185">Reference proteome</keyword>
<keyword id="KW-0732">Signal</keyword>